<sequence length="78" mass="8729">MFGRIGLPEILLILAIALIIFGPKKLPELGKALGSSLREFKSATKELREEVNEVEEEVKENKSSDVKENEDNKTEKST</sequence>
<comment type="function">
    <text evidence="1">Part of the twin-arginine translocation (Tat) system that transports large folded proteins containing a characteristic twin-arginine motif in their signal peptide across membranes. TatA could form the protein-conducting channel of the Tat system.</text>
</comment>
<comment type="subunit">
    <text evidence="1">Forms a complex with TatC.</text>
</comment>
<comment type="subcellular location">
    <subcellularLocation>
        <location evidence="1">Cell membrane</location>
        <topology evidence="1">Single-pass membrane protein</topology>
    </subcellularLocation>
</comment>
<comment type="similarity">
    <text evidence="1">Belongs to the TatA/E family.</text>
</comment>
<keyword id="KW-1003">Cell membrane</keyword>
<keyword id="KW-0472">Membrane</keyword>
<keyword id="KW-0653">Protein transport</keyword>
<keyword id="KW-1185">Reference proteome</keyword>
<keyword id="KW-0811">Translocation</keyword>
<keyword id="KW-0812">Transmembrane</keyword>
<keyword id="KW-1133">Transmembrane helix</keyword>
<keyword id="KW-0813">Transport</keyword>
<feature type="chain" id="PRO_1000197886" description="Sec-independent protein translocase protein TatA">
    <location>
        <begin position="1"/>
        <end position="78"/>
    </location>
</feature>
<feature type="transmembrane region" description="Helical" evidence="1">
    <location>
        <begin position="1"/>
        <end position="21"/>
    </location>
</feature>
<feature type="region of interest" description="Disordered" evidence="2">
    <location>
        <begin position="50"/>
        <end position="78"/>
    </location>
</feature>
<feature type="compositionally biased region" description="Basic and acidic residues" evidence="2">
    <location>
        <begin position="59"/>
        <end position="78"/>
    </location>
</feature>
<organism>
    <name type="scientific">Natranaerobius thermophilus (strain ATCC BAA-1301 / DSM 18059 / JW/NM-WN-LF)</name>
    <dbReference type="NCBI Taxonomy" id="457570"/>
    <lineage>
        <taxon>Bacteria</taxon>
        <taxon>Bacillati</taxon>
        <taxon>Bacillota</taxon>
        <taxon>Clostridia</taxon>
        <taxon>Natranaerobiales</taxon>
        <taxon>Natranaerobiaceae</taxon>
        <taxon>Natranaerobius</taxon>
    </lineage>
</organism>
<dbReference type="EMBL" id="CP001034">
    <property type="protein sequence ID" value="ACB84808.1"/>
    <property type="molecule type" value="Genomic_DNA"/>
</dbReference>
<dbReference type="RefSeq" id="WP_012447683.1">
    <property type="nucleotide sequence ID" value="NC_010718.1"/>
</dbReference>
<dbReference type="SMR" id="B2A203"/>
<dbReference type="FunCoup" id="B2A203">
    <property type="interactions" value="46"/>
</dbReference>
<dbReference type="STRING" id="457570.Nther_1225"/>
<dbReference type="KEGG" id="nth:Nther_1225"/>
<dbReference type="eggNOG" id="COG1826">
    <property type="taxonomic scope" value="Bacteria"/>
</dbReference>
<dbReference type="HOGENOM" id="CLU_086034_6_0_9"/>
<dbReference type="InParanoid" id="B2A203"/>
<dbReference type="Proteomes" id="UP000001683">
    <property type="component" value="Chromosome"/>
</dbReference>
<dbReference type="GO" id="GO:0033281">
    <property type="term" value="C:TAT protein transport complex"/>
    <property type="evidence" value="ECO:0007669"/>
    <property type="project" value="UniProtKB-UniRule"/>
</dbReference>
<dbReference type="GO" id="GO:0008320">
    <property type="term" value="F:protein transmembrane transporter activity"/>
    <property type="evidence" value="ECO:0007669"/>
    <property type="project" value="UniProtKB-UniRule"/>
</dbReference>
<dbReference type="GO" id="GO:0043953">
    <property type="term" value="P:protein transport by the Tat complex"/>
    <property type="evidence" value="ECO:0007669"/>
    <property type="project" value="UniProtKB-UniRule"/>
</dbReference>
<dbReference type="Gene3D" id="1.20.5.3310">
    <property type="match status" value="1"/>
</dbReference>
<dbReference type="HAMAP" id="MF_00236">
    <property type="entry name" value="TatA_E"/>
    <property type="match status" value="1"/>
</dbReference>
<dbReference type="InterPro" id="IPR003369">
    <property type="entry name" value="TatA/B/E"/>
</dbReference>
<dbReference type="InterPro" id="IPR006312">
    <property type="entry name" value="TatA/E"/>
</dbReference>
<dbReference type="NCBIfam" id="NF011429">
    <property type="entry name" value="PRK14857.1"/>
    <property type="match status" value="1"/>
</dbReference>
<dbReference type="NCBIfam" id="NF011430">
    <property type="entry name" value="PRK14861.1"/>
    <property type="match status" value="1"/>
</dbReference>
<dbReference type="NCBIfam" id="TIGR01411">
    <property type="entry name" value="tatAE"/>
    <property type="match status" value="1"/>
</dbReference>
<dbReference type="PANTHER" id="PTHR42982">
    <property type="entry name" value="SEC-INDEPENDENT PROTEIN TRANSLOCASE PROTEIN TATA"/>
    <property type="match status" value="1"/>
</dbReference>
<dbReference type="PANTHER" id="PTHR42982:SF1">
    <property type="entry name" value="SEC-INDEPENDENT PROTEIN TRANSLOCASE PROTEIN TATA"/>
    <property type="match status" value="1"/>
</dbReference>
<dbReference type="Pfam" id="PF02416">
    <property type="entry name" value="TatA_B_E"/>
    <property type="match status" value="1"/>
</dbReference>
<dbReference type="PRINTS" id="PR01506">
    <property type="entry name" value="TATBPROTEIN"/>
</dbReference>
<accession>B2A203</accession>
<protein>
    <recommendedName>
        <fullName evidence="1">Sec-independent protein translocase protein TatA</fullName>
    </recommendedName>
</protein>
<evidence type="ECO:0000255" key="1">
    <source>
        <dbReference type="HAMAP-Rule" id="MF_00236"/>
    </source>
</evidence>
<evidence type="ECO:0000256" key="2">
    <source>
        <dbReference type="SAM" id="MobiDB-lite"/>
    </source>
</evidence>
<name>TATA_NATTJ</name>
<gene>
    <name evidence="1" type="primary">tatA</name>
    <name type="ordered locus">Nther_1225</name>
</gene>
<reference key="1">
    <citation type="submission" date="2008-04" db="EMBL/GenBank/DDBJ databases">
        <title>Complete sequence of chromosome of Natranaerobius thermophilus JW/NM-WN-LF.</title>
        <authorList>
            <consortium name="US DOE Joint Genome Institute"/>
            <person name="Copeland A."/>
            <person name="Lucas S."/>
            <person name="Lapidus A."/>
            <person name="Glavina del Rio T."/>
            <person name="Dalin E."/>
            <person name="Tice H."/>
            <person name="Bruce D."/>
            <person name="Goodwin L."/>
            <person name="Pitluck S."/>
            <person name="Chertkov O."/>
            <person name="Brettin T."/>
            <person name="Detter J.C."/>
            <person name="Han C."/>
            <person name="Kuske C.R."/>
            <person name="Schmutz J."/>
            <person name="Larimer F."/>
            <person name="Land M."/>
            <person name="Hauser L."/>
            <person name="Kyrpides N."/>
            <person name="Lykidis A."/>
            <person name="Mesbah N.M."/>
            <person name="Wiegel J."/>
        </authorList>
    </citation>
    <scope>NUCLEOTIDE SEQUENCE [LARGE SCALE GENOMIC DNA]</scope>
    <source>
        <strain>ATCC BAA-1301 / DSM 18059 / JW/NM-WN-LF</strain>
    </source>
</reference>
<proteinExistence type="inferred from homology"/>